<reference key="1">
    <citation type="journal article" date="2005" name="Nature">
        <title>Genomic sequence of the pathogenic and allergenic filamentous fungus Aspergillus fumigatus.</title>
        <authorList>
            <person name="Nierman W.C."/>
            <person name="Pain A."/>
            <person name="Anderson M.J."/>
            <person name="Wortman J.R."/>
            <person name="Kim H.S."/>
            <person name="Arroyo J."/>
            <person name="Berriman M."/>
            <person name="Abe K."/>
            <person name="Archer D.B."/>
            <person name="Bermejo C."/>
            <person name="Bennett J.W."/>
            <person name="Bowyer P."/>
            <person name="Chen D."/>
            <person name="Collins M."/>
            <person name="Coulsen R."/>
            <person name="Davies R."/>
            <person name="Dyer P.S."/>
            <person name="Farman M.L."/>
            <person name="Fedorova N."/>
            <person name="Fedorova N.D."/>
            <person name="Feldblyum T.V."/>
            <person name="Fischer R."/>
            <person name="Fosker N."/>
            <person name="Fraser A."/>
            <person name="Garcia J.L."/>
            <person name="Garcia M.J."/>
            <person name="Goble A."/>
            <person name="Goldman G.H."/>
            <person name="Gomi K."/>
            <person name="Griffith-Jones S."/>
            <person name="Gwilliam R."/>
            <person name="Haas B.J."/>
            <person name="Haas H."/>
            <person name="Harris D.E."/>
            <person name="Horiuchi H."/>
            <person name="Huang J."/>
            <person name="Humphray S."/>
            <person name="Jimenez J."/>
            <person name="Keller N."/>
            <person name="Khouri H."/>
            <person name="Kitamoto K."/>
            <person name="Kobayashi T."/>
            <person name="Konzack S."/>
            <person name="Kulkarni R."/>
            <person name="Kumagai T."/>
            <person name="Lafton A."/>
            <person name="Latge J.-P."/>
            <person name="Li W."/>
            <person name="Lord A."/>
            <person name="Lu C."/>
            <person name="Majoros W.H."/>
            <person name="May G.S."/>
            <person name="Miller B.L."/>
            <person name="Mohamoud Y."/>
            <person name="Molina M."/>
            <person name="Monod M."/>
            <person name="Mouyna I."/>
            <person name="Mulligan S."/>
            <person name="Murphy L.D."/>
            <person name="O'Neil S."/>
            <person name="Paulsen I."/>
            <person name="Penalva M.A."/>
            <person name="Pertea M."/>
            <person name="Price C."/>
            <person name="Pritchard B.L."/>
            <person name="Quail M.A."/>
            <person name="Rabbinowitsch E."/>
            <person name="Rawlins N."/>
            <person name="Rajandream M.A."/>
            <person name="Reichard U."/>
            <person name="Renauld H."/>
            <person name="Robson G.D."/>
            <person name="Rodriguez de Cordoba S."/>
            <person name="Rodriguez-Pena J.M."/>
            <person name="Ronning C.M."/>
            <person name="Rutter S."/>
            <person name="Salzberg S.L."/>
            <person name="Sanchez M."/>
            <person name="Sanchez-Ferrero J.C."/>
            <person name="Saunders D."/>
            <person name="Seeger K."/>
            <person name="Squares R."/>
            <person name="Squares S."/>
            <person name="Takeuchi M."/>
            <person name="Tekaia F."/>
            <person name="Turner G."/>
            <person name="Vazquez de Aldana C.R."/>
            <person name="Weidman J."/>
            <person name="White O."/>
            <person name="Woodward J.R."/>
            <person name="Yu J.-H."/>
            <person name="Fraser C.M."/>
            <person name="Galagan J.E."/>
            <person name="Asai K."/>
            <person name="Machida M."/>
            <person name="Hall N."/>
            <person name="Barrell B.G."/>
            <person name="Denning D.W."/>
        </authorList>
    </citation>
    <scope>NUCLEOTIDE SEQUENCE [LARGE SCALE GENOMIC DNA]</scope>
    <source>
        <strain>ATCC MYA-4609 / CBS 101355 / FGSC A1100 / Af293</strain>
    </source>
</reference>
<name>CAPZA_ASPFU</name>
<protein>
    <recommendedName>
        <fullName>F-actin-capping protein subunit alpha</fullName>
    </recommendedName>
</protein>
<comment type="function">
    <text evidence="1">F-actin-capping proteins bind in a Ca(2+)-independent manner to the fast growing ends of actin filaments (barbed end) thereby blocking the exchange of subunits at these ends. Unlike other capping proteins (such as gelsolin and severin), these proteins do not sever actin filaments (By similarity).</text>
</comment>
<comment type="subunit">
    <text evidence="1">Heterodimer of an alpha and a beta subunit.</text>
</comment>
<comment type="subcellular location">
    <subcellularLocation>
        <location evidence="1">Cytoplasm</location>
        <location evidence="1">Cytoskeleton</location>
    </subcellularLocation>
    <text evidence="1">Septum.</text>
</comment>
<comment type="similarity">
    <text evidence="2">Belongs to the F-actin-capping protein alpha subunit family.</text>
</comment>
<sequence length="276" mass="30422">MSSTVELASSFIEGAPPGEALTSDGSDIIPSLAPAFERYNEKQLTTVKLPGASQEVIVSEFNKIEGNRYFDVESQTSFGVDHVTQQASGAQSYVLESQNADLIHVEVHSRSNQCSKSLLKSLAKHAAEHYPNCSYGVYPTEDDTAVAILLVANRYSPNNFWNGRFRSIYRVPVSESTTVSGKILVDVHYYEDGNVALNTNKPINIAIPSISAESIISRIAAAERDYQEELNRAFVQMAEGAFKNLRRQLPITRQKVEWEKVGGYRLGQDISGGKGR</sequence>
<feature type="chain" id="PRO_0000255614" description="F-actin-capping protein subunit alpha">
    <location>
        <begin position="1"/>
        <end position="276"/>
    </location>
</feature>
<organism>
    <name type="scientific">Aspergillus fumigatus (strain ATCC MYA-4609 / CBS 101355 / FGSC A1100 / Af293)</name>
    <name type="common">Neosartorya fumigata</name>
    <dbReference type="NCBI Taxonomy" id="330879"/>
    <lineage>
        <taxon>Eukaryota</taxon>
        <taxon>Fungi</taxon>
        <taxon>Dikarya</taxon>
        <taxon>Ascomycota</taxon>
        <taxon>Pezizomycotina</taxon>
        <taxon>Eurotiomycetes</taxon>
        <taxon>Eurotiomycetidae</taxon>
        <taxon>Eurotiales</taxon>
        <taxon>Aspergillaceae</taxon>
        <taxon>Aspergillus</taxon>
        <taxon>Aspergillus subgen. Fumigati</taxon>
    </lineage>
</organism>
<dbReference type="EMBL" id="AAHF01000006">
    <property type="protein sequence ID" value="EAL88857.1"/>
    <property type="molecule type" value="Genomic_DNA"/>
</dbReference>
<dbReference type="RefSeq" id="XP_750895.1">
    <property type="nucleotide sequence ID" value="XM_745802.1"/>
</dbReference>
<dbReference type="SMR" id="Q4WMF7"/>
<dbReference type="FunCoup" id="Q4WMF7">
    <property type="interactions" value="792"/>
</dbReference>
<dbReference type="STRING" id="330879.Q4WMF7"/>
<dbReference type="EnsemblFungi" id="EAL88857">
    <property type="protein sequence ID" value="EAL88857"/>
    <property type="gene ID" value="AFUA_6G10060"/>
</dbReference>
<dbReference type="GeneID" id="3508200"/>
<dbReference type="KEGG" id="afm:AFUA_6G10060"/>
<dbReference type="VEuPathDB" id="FungiDB:Afu6g10060"/>
<dbReference type="eggNOG" id="KOG0836">
    <property type="taxonomic scope" value="Eukaryota"/>
</dbReference>
<dbReference type="HOGENOM" id="CLU_045161_3_0_1"/>
<dbReference type="InParanoid" id="Q4WMF7"/>
<dbReference type="OMA" id="VACIEDH"/>
<dbReference type="OrthoDB" id="340550at2759"/>
<dbReference type="Proteomes" id="UP000002530">
    <property type="component" value="Chromosome 6"/>
</dbReference>
<dbReference type="GO" id="GO:0030479">
    <property type="term" value="C:actin cortical patch"/>
    <property type="evidence" value="ECO:0000318"/>
    <property type="project" value="GO_Central"/>
</dbReference>
<dbReference type="GO" id="GO:0005934">
    <property type="term" value="C:cellular bud tip"/>
    <property type="evidence" value="ECO:0007669"/>
    <property type="project" value="EnsemblFungi"/>
</dbReference>
<dbReference type="GO" id="GO:0030863">
    <property type="term" value="C:cortical cytoskeleton"/>
    <property type="evidence" value="ECO:0000318"/>
    <property type="project" value="GO_Central"/>
</dbReference>
<dbReference type="GO" id="GO:0008290">
    <property type="term" value="C:F-actin capping protein complex"/>
    <property type="evidence" value="ECO:0000318"/>
    <property type="project" value="GO_Central"/>
</dbReference>
<dbReference type="GO" id="GO:0000131">
    <property type="term" value="C:incipient cellular bud site"/>
    <property type="evidence" value="ECO:0007669"/>
    <property type="project" value="EnsemblFungi"/>
</dbReference>
<dbReference type="GO" id="GO:0110085">
    <property type="term" value="C:mitotic actomyosin contractile ring"/>
    <property type="evidence" value="ECO:0007669"/>
    <property type="project" value="EnsemblFungi"/>
</dbReference>
<dbReference type="GO" id="GO:0051015">
    <property type="term" value="F:actin filament binding"/>
    <property type="evidence" value="ECO:0000318"/>
    <property type="project" value="GO_Central"/>
</dbReference>
<dbReference type="GO" id="GO:0030036">
    <property type="term" value="P:actin cytoskeleton organization"/>
    <property type="evidence" value="ECO:0000318"/>
    <property type="project" value="GO_Central"/>
</dbReference>
<dbReference type="GO" id="GO:0051016">
    <property type="term" value="P:barbed-end actin filament capping"/>
    <property type="evidence" value="ECO:0000318"/>
    <property type="project" value="GO_Central"/>
</dbReference>
<dbReference type="FunFam" id="3.90.1150.210:FF:000003">
    <property type="entry name" value="F-actin-capping protein subunit alpha"/>
    <property type="match status" value="1"/>
</dbReference>
<dbReference type="Gene3D" id="3.30.1140.60">
    <property type="entry name" value="F-actin capping protein, alpha subunit"/>
    <property type="match status" value="1"/>
</dbReference>
<dbReference type="Gene3D" id="3.90.1150.210">
    <property type="entry name" value="F-actin capping protein, beta subunit"/>
    <property type="match status" value="1"/>
</dbReference>
<dbReference type="InterPro" id="IPR002189">
    <property type="entry name" value="CapZ_alpha"/>
</dbReference>
<dbReference type="InterPro" id="IPR037282">
    <property type="entry name" value="CapZ_alpha/beta"/>
</dbReference>
<dbReference type="InterPro" id="IPR042276">
    <property type="entry name" value="CapZ_alpha/beta_2"/>
</dbReference>
<dbReference type="InterPro" id="IPR042489">
    <property type="entry name" value="CapZ_alpha_1"/>
</dbReference>
<dbReference type="InterPro" id="IPR017865">
    <property type="entry name" value="F-actin_cap_asu_CS"/>
</dbReference>
<dbReference type="PANTHER" id="PTHR10653">
    <property type="entry name" value="F-ACTIN-CAPPING PROTEIN SUBUNIT ALPHA"/>
    <property type="match status" value="1"/>
</dbReference>
<dbReference type="PANTHER" id="PTHR10653:SF0">
    <property type="entry name" value="F-ACTIN-CAPPING PROTEIN SUBUNIT ALPHA"/>
    <property type="match status" value="1"/>
</dbReference>
<dbReference type="Pfam" id="PF01267">
    <property type="entry name" value="F-actin_cap_A"/>
    <property type="match status" value="1"/>
</dbReference>
<dbReference type="PRINTS" id="PR00191">
    <property type="entry name" value="FACTINCAPA"/>
</dbReference>
<dbReference type="SUPFAM" id="SSF90096">
    <property type="entry name" value="Subunits of heterodimeric actin filament capping protein Capz"/>
    <property type="match status" value="1"/>
</dbReference>
<dbReference type="PROSITE" id="PS00748">
    <property type="entry name" value="F_ACTIN_CAPPING_A_1"/>
    <property type="match status" value="1"/>
</dbReference>
<dbReference type="PROSITE" id="PS00749">
    <property type="entry name" value="F_ACTIN_CAPPING_A_2"/>
    <property type="match status" value="1"/>
</dbReference>
<accession>Q4WMF7</accession>
<keyword id="KW-0117">Actin capping</keyword>
<keyword id="KW-0009">Actin-binding</keyword>
<keyword id="KW-0963">Cytoplasm</keyword>
<keyword id="KW-0206">Cytoskeleton</keyword>
<keyword id="KW-1185">Reference proteome</keyword>
<proteinExistence type="inferred from homology"/>
<evidence type="ECO:0000250" key="1"/>
<evidence type="ECO:0000305" key="2"/>
<gene>
    <name type="primary">cap1</name>
    <name type="ORF">AFUA_6G10060</name>
</gene>